<protein>
    <recommendedName>
        <fullName evidence="1">Adenylate kinase</fullName>
        <ecNumber evidence="1">2.7.4.3</ecNumber>
    </recommendedName>
    <alternativeName>
        <fullName evidence="1">ATP-AMP transphosphorylase</fullName>
    </alternativeName>
    <alternativeName>
        <fullName evidence="1">ATP:AMP phosphotransferase</fullName>
    </alternativeName>
    <alternativeName>
        <fullName evidence="1">Adenylate kinase cytosolic and mitochondrial</fullName>
    </alternativeName>
    <alternativeName>
        <fullName evidence="1">Adenylate monophosphate kinase</fullName>
    </alternativeName>
</protein>
<sequence>MSGNSEVEYLKSLVSQLQDKIHHLEKSTSTSVSNTISSVTSALSPSSSIKPPRMVLIGPPGAGKGTQAPNISSKYCICHLATGDMLREQVARQTELGKAAKQIMDQGGLVSDEIMVGMIKQELEKNAECKNGFILDGFPRTVPQASKLDAMLAERKQAIDHAIELKIPDVLLISRITGRLVHPASGRSYHKEFNPPKKPMTDDITGEPLIQRSDDNVGTLRKRLDTYHAQTGPVVDYYKGTGVWTPVDAAQSPKLVWASISSILESKKN</sequence>
<accession>P0CO42</accession>
<accession>Q55KH8</accession>
<accession>Q5K931</accession>
<reference key="1">
    <citation type="journal article" date="2005" name="Science">
        <title>The genome of the basidiomycetous yeast and human pathogen Cryptococcus neoformans.</title>
        <authorList>
            <person name="Loftus B.J."/>
            <person name="Fung E."/>
            <person name="Roncaglia P."/>
            <person name="Rowley D."/>
            <person name="Amedeo P."/>
            <person name="Bruno D."/>
            <person name="Vamathevan J."/>
            <person name="Miranda M."/>
            <person name="Anderson I.J."/>
            <person name="Fraser J.A."/>
            <person name="Allen J.E."/>
            <person name="Bosdet I.E."/>
            <person name="Brent M.R."/>
            <person name="Chiu R."/>
            <person name="Doering T.L."/>
            <person name="Donlin M.J."/>
            <person name="D'Souza C.A."/>
            <person name="Fox D.S."/>
            <person name="Grinberg V."/>
            <person name="Fu J."/>
            <person name="Fukushima M."/>
            <person name="Haas B.J."/>
            <person name="Huang J.C."/>
            <person name="Janbon G."/>
            <person name="Jones S.J.M."/>
            <person name="Koo H.L."/>
            <person name="Krzywinski M.I."/>
            <person name="Kwon-Chung K.J."/>
            <person name="Lengeler K.B."/>
            <person name="Maiti R."/>
            <person name="Marra M.A."/>
            <person name="Marra R.E."/>
            <person name="Mathewson C.A."/>
            <person name="Mitchell T.G."/>
            <person name="Pertea M."/>
            <person name="Riggs F.R."/>
            <person name="Salzberg S.L."/>
            <person name="Schein J.E."/>
            <person name="Shvartsbeyn A."/>
            <person name="Shin H."/>
            <person name="Shumway M."/>
            <person name="Specht C.A."/>
            <person name="Suh B.B."/>
            <person name="Tenney A."/>
            <person name="Utterback T.R."/>
            <person name="Wickes B.L."/>
            <person name="Wortman J.R."/>
            <person name="Wye N.H."/>
            <person name="Kronstad J.W."/>
            <person name="Lodge J.K."/>
            <person name="Heitman J."/>
            <person name="Davis R.W."/>
            <person name="Fraser C.M."/>
            <person name="Hyman R.W."/>
        </authorList>
    </citation>
    <scope>NUCLEOTIDE SEQUENCE [LARGE SCALE GENOMIC DNA]</scope>
    <source>
        <strain>JEC21 / ATCC MYA-565</strain>
    </source>
</reference>
<organism>
    <name type="scientific">Cryptococcus neoformans var. neoformans serotype D (strain JEC21 / ATCC MYA-565)</name>
    <name type="common">Filobasidiella neoformans</name>
    <dbReference type="NCBI Taxonomy" id="214684"/>
    <lineage>
        <taxon>Eukaryota</taxon>
        <taxon>Fungi</taxon>
        <taxon>Dikarya</taxon>
        <taxon>Basidiomycota</taxon>
        <taxon>Agaricomycotina</taxon>
        <taxon>Tremellomycetes</taxon>
        <taxon>Tremellales</taxon>
        <taxon>Cryptococcaceae</taxon>
        <taxon>Cryptococcus</taxon>
        <taxon>Cryptococcus neoformans species complex</taxon>
    </lineage>
</organism>
<gene>
    <name evidence="1" type="primary">ADK1</name>
    <name type="ordered locus">CNK03420</name>
</gene>
<feature type="chain" id="PRO_0000365672" description="Adenylate kinase">
    <location>
        <begin position="1"/>
        <end position="269"/>
    </location>
</feature>
<feature type="region of interest" description="NMP" evidence="1">
    <location>
        <begin position="81"/>
        <end position="110"/>
    </location>
</feature>
<feature type="region of interest" description="LID" evidence="1">
    <location>
        <begin position="178"/>
        <end position="215"/>
    </location>
</feature>
<feature type="binding site" evidence="1">
    <location>
        <begin position="61"/>
        <end position="66"/>
    </location>
    <ligand>
        <name>ATP</name>
        <dbReference type="ChEBI" id="CHEBI:30616"/>
    </ligand>
</feature>
<feature type="binding site" evidence="1">
    <location>
        <position position="82"/>
    </location>
    <ligand>
        <name>AMP</name>
        <dbReference type="ChEBI" id="CHEBI:456215"/>
    </ligand>
</feature>
<feature type="binding site" evidence="1">
    <location>
        <position position="87"/>
    </location>
    <ligand>
        <name>AMP</name>
        <dbReference type="ChEBI" id="CHEBI:456215"/>
    </ligand>
</feature>
<feature type="binding site" evidence="1">
    <location>
        <begin position="108"/>
        <end position="110"/>
    </location>
    <ligand>
        <name>AMP</name>
        <dbReference type="ChEBI" id="CHEBI:456215"/>
    </ligand>
</feature>
<feature type="binding site" evidence="1">
    <location>
        <begin position="137"/>
        <end position="140"/>
    </location>
    <ligand>
        <name>AMP</name>
        <dbReference type="ChEBI" id="CHEBI:456215"/>
    </ligand>
</feature>
<feature type="binding site" evidence="1">
    <location>
        <position position="144"/>
    </location>
    <ligand>
        <name>AMP</name>
        <dbReference type="ChEBI" id="CHEBI:456215"/>
    </ligand>
</feature>
<feature type="binding site" evidence="1">
    <location>
        <position position="179"/>
    </location>
    <ligand>
        <name>ATP</name>
        <dbReference type="ChEBI" id="CHEBI:30616"/>
    </ligand>
</feature>
<feature type="binding site" evidence="1">
    <location>
        <begin position="188"/>
        <end position="189"/>
    </location>
    <ligand>
        <name>ATP</name>
        <dbReference type="ChEBI" id="CHEBI:30616"/>
    </ligand>
</feature>
<feature type="binding site" evidence="1">
    <location>
        <position position="212"/>
    </location>
    <ligand>
        <name>AMP</name>
        <dbReference type="ChEBI" id="CHEBI:456215"/>
    </ligand>
</feature>
<feature type="binding site" evidence="1">
    <location>
        <position position="223"/>
    </location>
    <ligand>
        <name>AMP</name>
        <dbReference type="ChEBI" id="CHEBI:456215"/>
    </ligand>
</feature>
<feature type="binding site" evidence="1">
    <location>
        <position position="251"/>
    </location>
    <ligand>
        <name>ATP</name>
        <dbReference type="ChEBI" id="CHEBI:30616"/>
    </ligand>
</feature>
<comment type="function">
    <text evidence="1">Catalyzes the reversible transfer of the terminal phosphate group between ATP and AMP. Plays an important role in cellular energy homeostasis and in adenine nucleotide metabolism. Adenylate kinase activity is critical for regulation of the phosphate utilization and the AMP de novo biosynthesis pathways.</text>
</comment>
<comment type="catalytic activity">
    <reaction evidence="1">
        <text>AMP + ATP = 2 ADP</text>
        <dbReference type="Rhea" id="RHEA:12973"/>
        <dbReference type="ChEBI" id="CHEBI:30616"/>
        <dbReference type="ChEBI" id="CHEBI:456215"/>
        <dbReference type="ChEBI" id="CHEBI:456216"/>
        <dbReference type="EC" id="2.7.4.3"/>
    </reaction>
</comment>
<comment type="subunit">
    <text evidence="1">Monomer.</text>
</comment>
<comment type="subcellular location">
    <subcellularLocation>
        <location evidence="1">Cytoplasm</location>
        <location evidence="1">Cytosol</location>
    </subcellularLocation>
    <subcellularLocation>
        <location evidence="1">Mitochondrion intermembrane space</location>
    </subcellularLocation>
    <text evidence="1">Predominantly mitochondrial.</text>
</comment>
<comment type="domain">
    <text evidence="1">Consists of three domains, a large central CORE domain and two small peripheral domains, NMPbind and LID, which undergo movements during catalysis. The LID domain closes over the site of phosphoryl transfer upon ATP binding. Assembling and dissambling the active center during each catalytic cycle provides an effective means to prevent ATP hydrolysis.</text>
</comment>
<comment type="similarity">
    <text evidence="1">Belongs to the adenylate kinase family. AK2 subfamily.</text>
</comment>
<proteinExistence type="inferred from homology"/>
<evidence type="ECO:0000255" key="1">
    <source>
        <dbReference type="HAMAP-Rule" id="MF_03168"/>
    </source>
</evidence>
<dbReference type="EC" id="2.7.4.3" evidence="1"/>
<dbReference type="EMBL" id="AE017351">
    <property type="protein sequence ID" value="AAW46409.1"/>
    <property type="molecule type" value="Genomic_DNA"/>
</dbReference>
<dbReference type="RefSeq" id="XP_567926.1">
    <property type="nucleotide sequence ID" value="XM_567926.1"/>
</dbReference>
<dbReference type="SMR" id="P0CO42"/>
<dbReference type="FunCoup" id="P0CO42">
    <property type="interactions" value="515"/>
</dbReference>
<dbReference type="STRING" id="214684.P0CO42"/>
<dbReference type="PaxDb" id="214684-P0CO42"/>
<dbReference type="EnsemblFungi" id="AAW46409">
    <property type="protein sequence ID" value="AAW46409"/>
    <property type="gene ID" value="CNK03420"/>
</dbReference>
<dbReference type="GeneID" id="3254609"/>
<dbReference type="KEGG" id="cne:CNK03420"/>
<dbReference type="VEuPathDB" id="FungiDB:CNK03420"/>
<dbReference type="eggNOG" id="KOG3078">
    <property type="taxonomic scope" value="Eukaryota"/>
</dbReference>
<dbReference type="HOGENOM" id="CLU_032354_1_0_1"/>
<dbReference type="InParanoid" id="P0CO42"/>
<dbReference type="OMA" id="VYHEQTA"/>
<dbReference type="OrthoDB" id="439792at2759"/>
<dbReference type="Proteomes" id="UP000002149">
    <property type="component" value="Chromosome 11"/>
</dbReference>
<dbReference type="GO" id="GO:0005737">
    <property type="term" value="C:cytoplasm"/>
    <property type="evidence" value="ECO:0000318"/>
    <property type="project" value="GO_Central"/>
</dbReference>
<dbReference type="GO" id="GO:0005829">
    <property type="term" value="C:cytosol"/>
    <property type="evidence" value="ECO:0007669"/>
    <property type="project" value="UniProtKB-SubCell"/>
</dbReference>
<dbReference type="GO" id="GO:0005758">
    <property type="term" value="C:mitochondrial intermembrane space"/>
    <property type="evidence" value="ECO:0007669"/>
    <property type="project" value="UniProtKB-SubCell"/>
</dbReference>
<dbReference type="GO" id="GO:0005739">
    <property type="term" value="C:mitochondrion"/>
    <property type="evidence" value="ECO:0000318"/>
    <property type="project" value="GO_Central"/>
</dbReference>
<dbReference type="GO" id="GO:0004017">
    <property type="term" value="F:adenylate kinase activity"/>
    <property type="evidence" value="ECO:0000318"/>
    <property type="project" value="GO_Central"/>
</dbReference>
<dbReference type="GO" id="GO:0016208">
    <property type="term" value="F:AMP binding"/>
    <property type="evidence" value="ECO:0007669"/>
    <property type="project" value="EnsemblFungi"/>
</dbReference>
<dbReference type="GO" id="GO:0005524">
    <property type="term" value="F:ATP binding"/>
    <property type="evidence" value="ECO:0007669"/>
    <property type="project" value="UniProtKB-KW"/>
</dbReference>
<dbReference type="GO" id="GO:0003688">
    <property type="term" value="F:DNA replication origin binding"/>
    <property type="evidence" value="ECO:0007669"/>
    <property type="project" value="EnsemblFungi"/>
</dbReference>
<dbReference type="GO" id="GO:0006172">
    <property type="term" value="P:ADP biosynthetic process"/>
    <property type="evidence" value="ECO:0000318"/>
    <property type="project" value="GO_Central"/>
</dbReference>
<dbReference type="GO" id="GO:0046033">
    <property type="term" value="P:AMP metabolic process"/>
    <property type="evidence" value="ECO:0007669"/>
    <property type="project" value="UniProtKB-UniRule"/>
</dbReference>
<dbReference type="GO" id="GO:0046034">
    <property type="term" value="P:ATP metabolic process"/>
    <property type="evidence" value="ECO:0007669"/>
    <property type="project" value="UniProtKB-UniRule"/>
</dbReference>
<dbReference type="GO" id="GO:0006270">
    <property type="term" value="P:DNA replication initiation"/>
    <property type="evidence" value="ECO:0007669"/>
    <property type="project" value="EnsemblFungi"/>
</dbReference>
<dbReference type="GO" id="GO:0036388">
    <property type="term" value="P:pre-replicative complex assembly"/>
    <property type="evidence" value="ECO:0007669"/>
    <property type="project" value="EnsemblFungi"/>
</dbReference>
<dbReference type="CDD" id="cd01428">
    <property type="entry name" value="ADK"/>
    <property type="match status" value="1"/>
</dbReference>
<dbReference type="FunFam" id="3.40.50.300:FF:000106">
    <property type="entry name" value="Adenylate kinase mitochondrial"/>
    <property type="match status" value="1"/>
</dbReference>
<dbReference type="Gene3D" id="3.40.50.300">
    <property type="entry name" value="P-loop containing nucleotide triphosphate hydrolases"/>
    <property type="match status" value="1"/>
</dbReference>
<dbReference type="HAMAP" id="MF_00235">
    <property type="entry name" value="Adenylate_kinase_Adk"/>
    <property type="match status" value="1"/>
</dbReference>
<dbReference type="HAMAP" id="MF_03168">
    <property type="entry name" value="Adenylate_kinase_AK2"/>
    <property type="match status" value="1"/>
</dbReference>
<dbReference type="InterPro" id="IPR006259">
    <property type="entry name" value="Adenyl_kin_sub"/>
</dbReference>
<dbReference type="InterPro" id="IPR000850">
    <property type="entry name" value="Adenylat/UMP-CMP_kin"/>
</dbReference>
<dbReference type="InterPro" id="IPR033690">
    <property type="entry name" value="Adenylat_kinase_CS"/>
</dbReference>
<dbReference type="InterPro" id="IPR007862">
    <property type="entry name" value="Adenylate_kinase_lid-dom"/>
</dbReference>
<dbReference type="InterPro" id="IPR028587">
    <property type="entry name" value="AK2"/>
</dbReference>
<dbReference type="InterPro" id="IPR027417">
    <property type="entry name" value="P-loop_NTPase"/>
</dbReference>
<dbReference type="NCBIfam" id="TIGR01351">
    <property type="entry name" value="adk"/>
    <property type="match status" value="1"/>
</dbReference>
<dbReference type="NCBIfam" id="NF001380">
    <property type="entry name" value="PRK00279.1-2"/>
    <property type="match status" value="1"/>
</dbReference>
<dbReference type="NCBIfam" id="NF001381">
    <property type="entry name" value="PRK00279.1-3"/>
    <property type="match status" value="1"/>
</dbReference>
<dbReference type="NCBIfam" id="NF011100">
    <property type="entry name" value="PRK14527.1"/>
    <property type="match status" value="1"/>
</dbReference>
<dbReference type="PANTHER" id="PTHR23359">
    <property type="entry name" value="NUCLEOTIDE KINASE"/>
    <property type="match status" value="1"/>
</dbReference>
<dbReference type="Pfam" id="PF00406">
    <property type="entry name" value="ADK"/>
    <property type="match status" value="1"/>
</dbReference>
<dbReference type="Pfam" id="PF05191">
    <property type="entry name" value="ADK_lid"/>
    <property type="match status" value="1"/>
</dbReference>
<dbReference type="PRINTS" id="PR00094">
    <property type="entry name" value="ADENYLTKNASE"/>
</dbReference>
<dbReference type="SUPFAM" id="SSF52540">
    <property type="entry name" value="P-loop containing nucleoside triphosphate hydrolases"/>
    <property type="match status" value="1"/>
</dbReference>
<dbReference type="PROSITE" id="PS00113">
    <property type="entry name" value="ADENYLATE_KINASE"/>
    <property type="match status" value="1"/>
</dbReference>
<name>KAD2_CRYNJ</name>
<keyword id="KW-0067">ATP-binding</keyword>
<keyword id="KW-0963">Cytoplasm</keyword>
<keyword id="KW-0418">Kinase</keyword>
<keyword id="KW-0496">Mitochondrion</keyword>
<keyword id="KW-0547">Nucleotide-binding</keyword>
<keyword id="KW-1185">Reference proteome</keyword>
<keyword id="KW-0808">Transferase</keyword>